<dbReference type="EMBL" id="CP000388">
    <property type="protein sequence ID" value="ABG41306.1"/>
    <property type="molecule type" value="Genomic_DNA"/>
</dbReference>
<dbReference type="RefSeq" id="WP_011575564.1">
    <property type="nucleotide sequence ID" value="NC_008228.1"/>
</dbReference>
<dbReference type="SMR" id="Q15S32"/>
<dbReference type="STRING" id="342610.Patl_2795"/>
<dbReference type="KEGG" id="pat:Patl_2795"/>
<dbReference type="eggNOG" id="COG3067">
    <property type="taxonomic scope" value="Bacteria"/>
</dbReference>
<dbReference type="HOGENOM" id="CLU_041110_0_0_6"/>
<dbReference type="OrthoDB" id="5288732at2"/>
<dbReference type="Proteomes" id="UP000001981">
    <property type="component" value="Chromosome"/>
</dbReference>
<dbReference type="GO" id="GO:0005886">
    <property type="term" value="C:plasma membrane"/>
    <property type="evidence" value="ECO:0007669"/>
    <property type="project" value="UniProtKB-SubCell"/>
</dbReference>
<dbReference type="GO" id="GO:0015385">
    <property type="term" value="F:sodium:proton antiporter activity"/>
    <property type="evidence" value="ECO:0007669"/>
    <property type="project" value="InterPro"/>
</dbReference>
<dbReference type="HAMAP" id="MF_01599">
    <property type="entry name" value="NhaB"/>
    <property type="match status" value="1"/>
</dbReference>
<dbReference type="InterPro" id="IPR004671">
    <property type="entry name" value="Na+/H+_antiporter_NhaB"/>
</dbReference>
<dbReference type="NCBIfam" id="TIGR00774">
    <property type="entry name" value="NhaB"/>
    <property type="match status" value="1"/>
</dbReference>
<dbReference type="NCBIfam" id="NF007093">
    <property type="entry name" value="PRK09547.1"/>
    <property type="match status" value="1"/>
</dbReference>
<dbReference type="PANTHER" id="PTHR43302:SF1">
    <property type="entry name" value="NA(+)_H(+) ANTIPORTER NHAB"/>
    <property type="match status" value="1"/>
</dbReference>
<dbReference type="PANTHER" id="PTHR43302">
    <property type="entry name" value="TRANSPORTER ARSB-RELATED"/>
    <property type="match status" value="1"/>
</dbReference>
<dbReference type="Pfam" id="PF06450">
    <property type="entry name" value="NhaB"/>
    <property type="match status" value="1"/>
</dbReference>
<reference key="1">
    <citation type="submission" date="2006-06" db="EMBL/GenBank/DDBJ databases">
        <title>Complete sequence of Pseudoalteromonas atlantica T6c.</title>
        <authorList>
            <consortium name="US DOE Joint Genome Institute"/>
            <person name="Copeland A."/>
            <person name="Lucas S."/>
            <person name="Lapidus A."/>
            <person name="Barry K."/>
            <person name="Detter J.C."/>
            <person name="Glavina del Rio T."/>
            <person name="Hammon N."/>
            <person name="Israni S."/>
            <person name="Dalin E."/>
            <person name="Tice H."/>
            <person name="Pitluck S."/>
            <person name="Saunders E."/>
            <person name="Brettin T."/>
            <person name="Bruce D."/>
            <person name="Han C."/>
            <person name="Tapia R."/>
            <person name="Gilna P."/>
            <person name="Schmutz J."/>
            <person name="Larimer F."/>
            <person name="Land M."/>
            <person name="Hauser L."/>
            <person name="Kyrpides N."/>
            <person name="Kim E."/>
            <person name="Karls A.C."/>
            <person name="Bartlett D."/>
            <person name="Higgins B.P."/>
            <person name="Richardson P."/>
        </authorList>
    </citation>
    <scope>NUCLEOTIDE SEQUENCE [LARGE SCALE GENOMIC DNA]</scope>
    <source>
        <strain>T6c / ATCC BAA-1087</strain>
    </source>
</reference>
<feature type="chain" id="PRO_0000333105" description="Na(+)/H(+) antiporter NhaB">
    <location>
        <begin position="1"/>
        <end position="526"/>
    </location>
</feature>
<feature type="transmembrane region" description="Helical" evidence="1">
    <location>
        <begin position="25"/>
        <end position="45"/>
    </location>
</feature>
<feature type="transmembrane region" description="Helical" evidence="1">
    <location>
        <begin position="52"/>
        <end position="72"/>
    </location>
</feature>
<feature type="transmembrane region" description="Helical" evidence="1">
    <location>
        <begin position="89"/>
        <end position="109"/>
    </location>
</feature>
<feature type="transmembrane region" description="Helical" evidence="1">
    <location>
        <begin position="139"/>
        <end position="159"/>
    </location>
</feature>
<feature type="transmembrane region" description="Helical" evidence="1">
    <location>
        <begin position="204"/>
        <end position="224"/>
    </location>
</feature>
<feature type="transmembrane region" description="Helical" evidence="1">
    <location>
        <begin position="240"/>
        <end position="260"/>
    </location>
</feature>
<feature type="transmembrane region" description="Helical" evidence="1">
    <location>
        <begin position="305"/>
        <end position="325"/>
    </location>
</feature>
<feature type="transmembrane region" description="Helical" evidence="1">
    <location>
        <begin position="355"/>
        <end position="375"/>
    </location>
</feature>
<feature type="transmembrane region" description="Helical" evidence="1">
    <location>
        <begin position="391"/>
        <end position="411"/>
    </location>
</feature>
<feature type="transmembrane region" description="Helical" evidence="1">
    <location>
        <begin position="448"/>
        <end position="468"/>
    </location>
</feature>
<feature type="transmembrane region" description="Helical" evidence="1">
    <location>
        <begin position="479"/>
        <end position="499"/>
    </location>
</feature>
<protein>
    <recommendedName>
        <fullName evidence="1">Na(+)/H(+) antiporter NhaB</fullName>
    </recommendedName>
    <alternativeName>
        <fullName evidence="1">Sodium/proton antiporter NhaB</fullName>
    </alternativeName>
</protein>
<sequence>MQQSTIGAVYSNFLGQAPDWYKKSIIAFLIFNPILFMADPYIAGWALVLEFIFTLAMALKCYPLQPGGLLLIEALFIGMTSPEHMKHEIVVNIEVVLLLVFMVAGIYFMKDMLLFMFTKLLLKLKNKIALSMSFVAASAFLSAFLDALTVVAVIIAVGMGFYSIYHKVASGKEFHSDHDHTSDDHVDHPKRQDLEDFRAFLRNLMMHAAVGTALGGVMTMVGEPQNLIIADKASWNFGEFFVRMSPVTIPVFFAGIATTFALEKFKIFSYGAQLPQVVRDILTAHSHQQEATRTKQDSAKLWIQGFIGIWLVIGLAGHFAAVGLIGLSIIVLATSMNGIIDEHSIGKAFEEALPFTALLCVFFGVVAVIIDQGLFTPVIDWVLTFEGRSQLVMFYLANGALSMVSDNVFVGSVYITEVAAALEHGHITRDEFDMLAVAINTGTNLPSVATPNGQAAFLFLLTSAIAPLLRLSYGTMVYMALPYTIVLTIVGLAATYFGLGDLTNWLYDMHLIEHHSATLGAEAAAH</sequence>
<gene>
    <name evidence="1" type="primary">nhaB</name>
    <name type="ordered locus">Patl_2795</name>
</gene>
<comment type="function">
    <text evidence="1">Na(+)/H(+) antiporter that extrudes sodium in exchange for external protons.</text>
</comment>
<comment type="catalytic activity">
    <reaction evidence="1">
        <text>2 Na(+)(in) + 3 H(+)(out) = 2 Na(+)(out) + 3 H(+)(in)</text>
        <dbReference type="Rhea" id="RHEA:29247"/>
        <dbReference type="ChEBI" id="CHEBI:15378"/>
        <dbReference type="ChEBI" id="CHEBI:29101"/>
    </reaction>
    <physiologicalReaction direction="left-to-right" evidence="1">
        <dbReference type="Rhea" id="RHEA:29248"/>
    </physiologicalReaction>
</comment>
<comment type="subcellular location">
    <subcellularLocation>
        <location evidence="1">Cell inner membrane</location>
        <topology evidence="1">Multi-pass membrane protein</topology>
    </subcellularLocation>
</comment>
<comment type="similarity">
    <text evidence="1">Belongs to the NhaB Na(+)/H(+) (TC 2.A.34) antiporter family.</text>
</comment>
<accession>Q15S32</accession>
<keyword id="KW-0050">Antiport</keyword>
<keyword id="KW-0997">Cell inner membrane</keyword>
<keyword id="KW-1003">Cell membrane</keyword>
<keyword id="KW-0406">Ion transport</keyword>
<keyword id="KW-0472">Membrane</keyword>
<keyword id="KW-0915">Sodium</keyword>
<keyword id="KW-0739">Sodium transport</keyword>
<keyword id="KW-0812">Transmembrane</keyword>
<keyword id="KW-1133">Transmembrane helix</keyword>
<keyword id="KW-0813">Transport</keyword>
<name>NHAB_PSEA6</name>
<proteinExistence type="inferred from homology"/>
<evidence type="ECO:0000255" key="1">
    <source>
        <dbReference type="HAMAP-Rule" id="MF_01599"/>
    </source>
</evidence>
<organism>
    <name type="scientific">Pseudoalteromonas atlantica (strain T6c / ATCC BAA-1087)</name>
    <dbReference type="NCBI Taxonomy" id="3042615"/>
    <lineage>
        <taxon>Bacteria</taxon>
        <taxon>Pseudomonadati</taxon>
        <taxon>Pseudomonadota</taxon>
        <taxon>Gammaproteobacteria</taxon>
        <taxon>Alteromonadales</taxon>
        <taxon>Alteromonadaceae</taxon>
        <taxon>Paraglaciecola</taxon>
    </lineage>
</organism>